<evidence type="ECO:0000255" key="1">
    <source>
        <dbReference type="HAMAP-Rule" id="MF_01014"/>
    </source>
</evidence>
<keyword id="KW-0028">Amino-acid biosynthesis</keyword>
<keyword id="KW-0963">Cytoplasm</keyword>
<keyword id="KW-0368">Histidine biosynthesis</keyword>
<keyword id="KW-0413">Isomerase</keyword>
<accession>Q6F7A5</accession>
<gene>
    <name evidence="1" type="primary">hisA</name>
    <name type="ordered locus">ACIAD3398</name>
</gene>
<dbReference type="EC" id="5.3.1.16" evidence="1"/>
<dbReference type="EMBL" id="CR543861">
    <property type="protein sequence ID" value="CAG70060.1"/>
    <property type="molecule type" value="Genomic_DNA"/>
</dbReference>
<dbReference type="RefSeq" id="WP_004923616.1">
    <property type="nucleotide sequence ID" value="NC_005966.1"/>
</dbReference>
<dbReference type="SMR" id="Q6F7A5"/>
<dbReference type="STRING" id="202950.GCA_001485005_02236"/>
<dbReference type="GeneID" id="45235592"/>
<dbReference type="KEGG" id="aci:ACIAD3398"/>
<dbReference type="eggNOG" id="COG0106">
    <property type="taxonomic scope" value="Bacteria"/>
</dbReference>
<dbReference type="HOGENOM" id="CLU_048577_1_1_6"/>
<dbReference type="OrthoDB" id="9807749at2"/>
<dbReference type="BioCyc" id="ASP62977:ACIAD_RS15385-MONOMER"/>
<dbReference type="UniPathway" id="UPA00031">
    <property type="reaction ID" value="UER00009"/>
</dbReference>
<dbReference type="Proteomes" id="UP000000430">
    <property type="component" value="Chromosome"/>
</dbReference>
<dbReference type="GO" id="GO:0005737">
    <property type="term" value="C:cytoplasm"/>
    <property type="evidence" value="ECO:0007669"/>
    <property type="project" value="UniProtKB-SubCell"/>
</dbReference>
<dbReference type="GO" id="GO:0003949">
    <property type="term" value="F:1-(5-phosphoribosyl)-5-[(5-phosphoribosylamino)methylideneamino]imidazole-4-carboxamide isomerase activity"/>
    <property type="evidence" value="ECO:0007669"/>
    <property type="project" value="UniProtKB-UniRule"/>
</dbReference>
<dbReference type="GO" id="GO:0000105">
    <property type="term" value="P:L-histidine biosynthetic process"/>
    <property type="evidence" value="ECO:0007669"/>
    <property type="project" value="UniProtKB-UniRule"/>
</dbReference>
<dbReference type="GO" id="GO:0000162">
    <property type="term" value="P:L-tryptophan biosynthetic process"/>
    <property type="evidence" value="ECO:0007669"/>
    <property type="project" value="TreeGrafter"/>
</dbReference>
<dbReference type="CDD" id="cd04732">
    <property type="entry name" value="HisA"/>
    <property type="match status" value="1"/>
</dbReference>
<dbReference type="FunFam" id="3.20.20.70:FF:000009">
    <property type="entry name" value="1-(5-phosphoribosyl)-5-[(5-phosphoribosylamino)methylideneamino] imidazole-4-carboxamide isomerase"/>
    <property type="match status" value="1"/>
</dbReference>
<dbReference type="Gene3D" id="3.20.20.70">
    <property type="entry name" value="Aldolase class I"/>
    <property type="match status" value="1"/>
</dbReference>
<dbReference type="HAMAP" id="MF_01014">
    <property type="entry name" value="HisA"/>
    <property type="match status" value="1"/>
</dbReference>
<dbReference type="InterPro" id="IPR013785">
    <property type="entry name" value="Aldolase_TIM"/>
</dbReference>
<dbReference type="InterPro" id="IPR006062">
    <property type="entry name" value="His_biosynth"/>
</dbReference>
<dbReference type="InterPro" id="IPR006063">
    <property type="entry name" value="HisA_bact_arch"/>
</dbReference>
<dbReference type="InterPro" id="IPR044524">
    <property type="entry name" value="Isoase_HisA-like"/>
</dbReference>
<dbReference type="InterPro" id="IPR023016">
    <property type="entry name" value="Isoase_HisA-like_bact"/>
</dbReference>
<dbReference type="InterPro" id="IPR011060">
    <property type="entry name" value="RibuloseP-bd_barrel"/>
</dbReference>
<dbReference type="NCBIfam" id="TIGR00007">
    <property type="entry name" value="1-(5-phosphoribosyl)-5-[(5-phosphoribosylamino)methylideneamino]imidazole-4-carboxamide isomerase"/>
    <property type="match status" value="1"/>
</dbReference>
<dbReference type="NCBIfam" id="NF010112">
    <property type="entry name" value="PRK13585.1"/>
    <property type="match status" value="1"/>
</dbReference>
<dbReference type="PANTHER" id="PTHR43090">
    <property type="entry name" value="1-(5-PHOSPHORIBOSYL)-5-[(5-PHOSPHORIBOSYLAMINO)METHYLIDENEAMINO] IMIDAZOLE-4-CARBOXAMIDE ISOMERASE"/>
    <property type="match status" value="1"/>
</dbReference>
<dbReference type="PANTHER" id="PTHR43090:SF2">
    <property type="entry name" value="1-(5-PHOSPHORIBOSYL)-5-[(5-PHOSPHORIBOSYLAMINO)METHYLIDENEAMINO] IMIDAZOLE-4-CARBOXAMIDE ISOMERASE"/>
    <property type="match status" value="1"/>
</dbReference>
<dbReference type="Pfam" id="PF00977">
    <property type="entry name" value="His_biosynth"/>
    <property type="match status" value="1"/>
</dbReference>
<dbReference type="SUPFAM" id="SSF51366">
    <property type="entry name" value="Ribulose-phoshate binding barrel"/>
    <property type="match status" value="1"/>
</dbReference>
<comment type="catalytic activity">
    <reaction evidence="1">
        <text>1-(5-phospho-beta-D-ribosyl)-5-[(5-phospho-beta-D-ribosylamino)methylideneamino]imidazole-4-carboxamide = 5-[(5-phospho-1-deoxy-D-ribulos-1-ylimino)methylamino]-1-(5-phospho-beta-D-ribosyl)imidazole-4-carboxamide</text>
        <dbReference type="Rhea" id="RHEA:15469"/>
        <dbReference type="ChEBI" id="CHEBI:58435"/>
        <dbReference type="ChEBI" id="CHEBI:58525"/>
        <dbReference type="EC" id="5.3.1.16"/>
    </reaction>
</comment>
<comment type="pathway">
    <text evidence="1">Amino-acid biosynthesis; L-histidine biosynthesis; L-histidine from 5-phospho-alpha-D-ribose 1-diphosphate: step 4/9.</text>
</comment>
<comment type="subcellular location">
    <subcellularLocation>
        <location evidence="1">Cytoplasm</location>
    </subcellularLocation>
</comment>
<comment type="similarity">
    <text evidence="1">Belongs to the HisA/HisF family.</text>
</comment>
<reference key="1">
    <citation type="journal article" date="2004" name="Nucleic Acids Res.">
        <title>Unique features revealed by the genome sequence of Acinetobacter sp. ADP1, a versatile and naturally transformation competent bacterium.</title>
        <authorList>
            <person name="Barbe V."/>
            <person name="Vallenet D."/>
            <person name="Fonknechten N."/>
            <person name="Kreimeyer A."/>
            <person name="Oztas S."/>
            <person name="Labarre L."/>
            <person name="Cruveiller S."/>
            <person name="Robert C."/>
            <person name="Duprat S."/>
            <person name="Wincker P."/>
            <person name="Ornston L.N."/>
            <person name="Weissenbach J."/>
            <person name="Marliere P."/>
            <person name="Cohen G.N."/>
            <person name="Medigue C."/>
        </authorList>
    </citation>
    <scope>NUCLEOTIDE SEQUENCE [LARGE SCALE GENOMIC DNA]</scope>
    <source>
        <strain>ATCC 33305 / BD413 / ADP1</strain>
    </source>
</reference>
<proteinExistence type="inferred from homology"/>
<organism>
    <name type="scientific">Acinetobacter baylyi (strain ATCC 33305 / BD413 / ADP1)</name>
    <dbReference type="NCBI Taxonomy" id="62977"/>
    <lineage>
        <taxon>Bacteria</taxon>
        <taxon>Pseudomonadati</taxon>
        <taxon>Pseudomonadota</taxon>
        <taxon>Gammaproteobacteria</taxon>
        <taxon>Moraxellales</taxon>
        <taxon>Moraxellaceae</taxon>
        <taxon>Acinetobacter</taxon>
    </lineage>
</organism>
<feature type="chain" id="PRO_0000141964" description="1-(5-phosphoribosyl)-5-[(5-phosphoribosylamino)methylideneamino] imidazole-4-carboxamide isomerase">
    <location>
        <begin position="1"/>
        <end position="243"/>
    </location>
</feature>
<feature type="active site" description="Proton acceptor" evidence="1">
    <location>
        <position position="8"/>
    </location>
</feature>
<feature type="active site" description="Proton donor" evidence="1">
    <location>
        <position position="130"/>
    </location>
</feature>
<protein>
    <recommendedName>
        <fullName evidence="1">1-(5-phosphoribosyl)-5-[(5-phosphoribosylamino)methylideneamino] imidazole-4-carboxamide isomerase</fullName>
        <ecNumber evidence="1">5.3.1.16</ecNumber>
    </recommendedName>
    <alternativeName>
        <fullName evidence="1">Phosphoribosylformimino-5-aminoimidazole carboxamide ribotide isomerase</fullName>
    </alternativeName>
</protein>
<sequence length="243" mass="25926">MLIIPAIDLKDGKCVRLKQGRMEDDTVFSDDPVATAQHWVNEGARRLHLVDLNGAFAGTPIHKPVVEAIAKAQPELPIQIGGGIRSLETIEHYLDAGVSFVIIGTKAVQDPEFVEQACKQFAGHIIVGIDAKDGMVATDGWANVTDVKATDLAKRFADAGVSSIVYTDIARDGMMQGVNVEQTVNLAQYSGLPVIASGGVTNLDDVRLLKGKPGILGAITGRAIYEGTLSLREAQLLLDQNTL</sequence>
<name>HIS4_ACIAD</name>